<comment type="function">
    <text evidence="1">Exporter of O-acetylserine (OAS) and cysteine.</text>
</comment>
<comment type="catalytic activity">
    <reaction evidence="1">
        <text>O-acetyl-L-serine(in) = O-acetyl-L-serine(out)</text>
        <dbReference type="Rhea" id="RHEA:29659"/>
        <dbReference type="ChEBI" id="CHEBI:58340"/>
    </reaction>
    <physiologicalReaction direction="left-to-right" evidence="1">
        <dbReference type="Rhea" id="RHEA:29660"/>
    </physiologicalReaction>
</comment>
<comment type="catalytic activity">
    <reaction evidence="1">
        <text>L-cysteine(in) = L-cysteine(out)</text>
        <dbReference type="Rhea" id="RHEA:29655"/>
        <dbReference type="ChEBI" id="CHEBI:35235"/>
    </reaction>
    <physiologicalReaction direction="left-to-right" evidence="1">
        <dbReference type="Rhea" id="RHEA:29656"/>
    </physiologicalReaction>
</comment>
<comment type="subcellular location">
    <subcellularLocation>
        <location evidence="1">Cell inner membrane</location>
        <topology evidence="2">Multi-pass membrane protein</topology>
    </subcellularLocation>
</comment>
<comment type="similarity">
    <text evidence="3">Belongs to the Rht family.</text>
</comment>
<feature type="chain" id="PRO_0000318720" description="Cysteine/O-acetylserine efflux protein">
    <location>
        <begin position="1"/>
        <end position="195"/>
    </location>
</feature>
<feature type="topological domain" description="Periplasmic" evidence="2">
    <location>
        <begin position="1"/>
        <end position="7"/>
    </location>
</feature>
<feature type="transmembrane region" description="Helical" evidence="2">
    <location>
        <begin position="8"/>
        <end position="28"/>
    </location>
</feature>
<feature type="topological domain" description="Cytoplasmic" evidence="2">
    <location>
        <begin position="29"/>
        <end position="46"/>
    </location>
</feature>
<feature type="transmembrane region" description="Helical" evidence="2">
    <location>
        <begin position="47"/>
        <end position="67"/>
    </location>
</feature>
<feature type="topological domain" description="Periplasmic" evidence="2">
    <location>
        <begin position="68"/>
        <end position="69"/>
    </location>
</feature>
<feature type="transmembrane region" description="Helical" evidence="2">
    <location>
        <begin position="70"/>
        <end position="90"/>
    </location>
</feature>
<feature type="topological domain" description="Cytoplasmic" evidence="2">
    <location>
        <begin position="91"/>
        <end position="104"/>
    </location>
</feature>
<feature type="transmembrane region" description="Helical" evidence="2">
    <location>
        <begin position="105"/>
        <end position="125"/>
    </location>
</feature>
<feature type="topological domain" description="Periplasmic" evidence="2">
    <location>
        <begin position="126"/>
        <end position="141"/>
    </location>
</feature>
<feature type="transmembrane region" description="Helical" evidence="2">
    <location>
        <begin position="142"/>
        <end position="162"/>
    </location>
</feature>
<feature type="topological domain" description="Cytoplasmic" evidence="2">
    <location>
        <begin position="163"/>
        <end position="176"/>
    </location>
</feature>
<feature type="transmembrane region" description="Helical" evidence="2">
    <location>
        <begin position="177"/>
        <end position="194"/>
    </location>
</feature>
<feature type="topological domain" description="Periplasmic" evidence="1">
    <location>
        <position position="195"/>
    </location>
</feature>
<protein>
    <recommendedName>
        <fullName evidence="1">Cysteine/O-acetylserine efflux protein</fullName>
    </recommendedName>
</protein>
<gene>
    <name type="primary">eamB</name>
    <name type="ordered locus">UTI89_C2900</name>
</gene>
<proteinExistence type="inferred from homology"/>
<accession>Q1R8F4</accession>
<dbReference type="EMBL" id="CP000243">
    <property type="protein sequence ID" value="ABE08360.1"/>
    <property type="molecule type" value="Genomic_DNA"/>
</dbReference>
<dbReference type="RefSeq" id="WP_000189209.1">
    <property type="nucleotide sequence ID" value="NZ_CP064825.1"/>
</dbReference>
<dbReference type="KEGG" id="eci:UTI89_C2900"/>
<dbReference type="HOGENOM" id="CLU_079569_1_2_6"/>
<dbReference type="Proteomes" id="UP000001952">
    <property type="component" value="Chromosome"/>
</dbReference>
<dbReference type="GO" id="GO:0005886">
    <property type="term" value="C:plasma membrane"/>
    <property type="evidence" value="ECO:0007669"/>
    <property type="project" value="UniProtKB-SubCell"/>
</dbReference>
<dbReference type="GO" id="GO:0015171">
    <property type="term" value="F:amino acid transmembrane transporter activity"/>
    <property type="evidence" value="ECO:0007669"/>
    <property type="project" value="TreeGrafter"/>
</dbReference>
<dbReference type="GO" id="GO:0033228">
    <property type="term" value="P:cysteine export across plasma membrane"/>
    <property type="evidence" value="ECO:0007669"/>
    <property type="project" value="TreeGrafter"/>
</dbReference>
<dbReference type="InterPro" id="IPR001123">
    <property type="entry name" value="LeuE-type"/>
</dbReference>
<dbReference type="NCBIfam" id="NF007653">
    <property type="entry name" value="PRK10323.1"/>
    <property type="match status" value="1"/>
</dbReference>
<dbReference type="PANTHER" id="PTHR30086">
    <property type="entry name" value="ARGININE EXPORTER PROTEIN ARGO"/>
    <property type="match status" value="1"/>
</dbReference>
<dbReference type="PANTHER" id="PTHR30086:SF20">
    <property type="entry name" value="ARGININE EXPORTER PROTEIN ARGO-RELATED"/>
    <property type="match status" value="1"/>
</dbReference>
<dbReference type="Pfam" id="PF01810">
    <property type="entry name" value="LysE"/>
    <property type="match status" value="1"/>
</dbReference>
<evidence type="ECO:0000250" key="1">
    <source>
        <dbReference type="UniProtKB" id="P38101"/>
    </source>
</evidence>
<evidence type="ECO:0000255" key="2"/>
<evidence type="ECO:0000305" key="3"/>
<organism>
    <name type="scientific">Escherichia coli (strain UTI89 / UPEC)</name>
    <dbReference type="NCBI Taxonomy" id="364106"/>
    <lineage>
        <taxon>Bacteria</taxon>
        <taxon>Pseudomonadati</taxon>
        <taxon>Pseudomonadota</taxon>
        <taxon>Gammaproteobacteria</taxon>
        <taxon>Enterobacterales</taxon>
        <taxon>Enterobacteriaceae</taxon>
        <taxon>Escherichia</taxon>
    </lineage>
</organism>
<keyword id="KW-0029">Amino-acid transport</keyword>
<keyword id="KW-0997">Cell inner membrane</keyword>
<keyword id="KW-1003">Cell membrane</keyword>
<keyword id="KW-0472">Membrane</keyword>
<keyword id="KW-0812">Transmembrane</keyword>
<keyword id="KW-1133">Transmembrane helix</keyword>
<keyword id="KW-0813">Transport</keyword>
<sequence length="195" mass="21278">MTPTLLSAFWTYTLITAMTPGPNNILALSSATSHGFRQSTRVLAGMSLGFLIVMLLCAGISFSLAVIDPAAVHLLSWAGAAYIVWLAWKIATSPTKEDGLQTKPISFWASFALQFVNVKIILYGVTALSTFVLPQTQALSWVVGVSVLLAMIGTFGNVCWALAGHLFQRLFRQYGRQLNIVLALLLVYCAVRIFY</sequence>
<name>EAMB_ECOUT</name>
<reference key="1">
    <citation type="journal article" date="2006" name="Proc. Natl. Acad. Sci. U.S.A.">
        <title>Identification of genes subject to positive selection in uropathogenic strains of Escherichia coli: a comparative genomics approach.</title>
        <authorList>
            <person name="Chen S.L."/>
            <person name="Hung C.-S."/>
            <person name="Xu J."/>
            <person name="Reigstad C.S."/>
            <person name="Magrini V."/>
            <person name="Sabo A."/>
            <person name="Blasiar D."/>
            <person name="Bieri T."/>
            <person name="Meyer R.R."/>
            <person name="Ozersky P."/>
            <person name="Armstrong J.R."/>
            <person name="Fulton R.S."/>
            <person name="Latreille J.P."/>
            <person name="Spieth J."/>
            <person name="Hooton T.M."/>
            <person name="Mardis E.R."/>
            <person name="Hultgren S.J."/>
            <person name="Gordon J.I."/>
        </authorList>
    </citation>
    <scope>NUCLEOTIDE SEQUENCE [LARGE SCALE GENOMIC DNA]</scope>
    <source>
        <strain>UTI89 / UPEC</strain>
    </source>
</reference>